<comment type="function">
    <text evidence="2">Involved in the regulation of actin polymerization.</text>
</comment>
<comment type="subcellular location">
    <subcellularLocation>
        <location evidence="1">Cell membrane</location>
        <topology evidence="1">Peripheral membrane protein</topology>
    </subcellularLocation>
</comment>
<comment type="similarity">
    <text evidence="6">Belongs to the CAP family.</text>
</comment>
<keyword id="KW-0007">Acetylation</keyword>
<keyword id="KW-1003">Cell membrane</keyword>
<keyword id="KW-0472">Membrane</keyword>
<keyword id="KW-0597">Phosphoprotein</keyword>
<keyword id="KW-1185">Reference proteome</keyword>
<reference key="1">
    <citation type="submission" date="2004-11" db="EMBL/GenBank/DDBJ databases">
        <authorList>
            <consortium name="The German cDNA consortium"/>
        </authorList>
    </citation>
    <scope>NUCLEOTIDE SEQUENCE [LARGE SCALE MRNA]</scope>
    <source>
        <tissue>Brain cortex</tissue>
    </source>
</reference>
<organism>
    <name type="scientific">Pongo abelii</name>
    <name type="common">Sumatran orangutan</name>
    <name type="synonym">Pongo pygmaeus abelii</name>
    <dbReference type="NCBI Taxonomy" id="9601"/>
    <lineage>
        <taxon>Eukaryota</taxon>
        <taxon>Metazoa</taxon>
        <taxon>Chordata</taxon>
        <taxon>Craniata</taxon>
        <taxon>Vertebrata</taxon>
        <taxon>Euteleostomi</taxon>
        <taxon>Mammalia</taxon>
        <taxon>Eutheria</taxon>
        <taxon>Euarchontoglires</taxon>
        <taxon>Primates</taxon>
        <taxon>Haplorrhini</taxon>
        <taxon>Catarrhini</taxon>
        <taxon>Hominidae</taxon>
        <taxon>Pongo</taxon>
    </lineage>
</organism>
<evidence type="ECO:0000250" key="1"/>
<evidence type="ECO:0000250" key="2">
    <source>
        <dbReference type="UniProtKB" id="P40123"/>
    </source>
</evidence>
<evidence type="ECO:0000250" key="3">
    <source>
        <dbReference type="UniProtKB" id="P52481"/>
    </source>
</evidence>
<evidence type="ECO:0000255" key="4">
    <source>
        <dbReference type="PROSITE-ProRule" id="PRU00659"/>
    </source>
</evidence>
<evidence type="ECO:0000256" key="5">
    <source>
        <dbReference type="SAM" id="MobiDB-lite"/>
    </source>
</evidence>
<evidence type="ECO:0000305" key="6"/>
<sequence>MANMQGLVERLERAVSRLESLSAESHRPPGNCGEVNGVIGGVAPSVEAFDKLMDSMVAEFLKNSRILAGDVETHAEMVHSAFQAQRAFLLMASQYQQPHENDVAALLKPISEKIQEIQTFRERNRGSNMFNHLSAVSESIPALGWIAVSPKPGPYVKEMNDAATFYTNRVLKDYKHSDLRHVDWVKSYLNIWSELQAYIKEHHTTGLTWSKTGPVASTVSAFSVLSSGPGLPPPPPPPPPPGPPPLLENEGKKEESSPSRSALFAQLNQGEAITKGLRHVTDDQKTYKNPSLRAQGGQTRSPTKSHTPSPTSPKSYPSQKHAPVLELEGKKWRVEYQEDRNDLVISETELKQVAYIFKCEKSTLQIKGKVNSIIIDNCKKLGLVFDNVVGIVEVINSQDIQIQVMGRVPTISINKTEGCHIYLSEDALDCEIVSAKSSEMNILIPQDGDYREFPIPEQFKTAWDGSKLITEPAEIMA</sequence>
<accession>Q5R5X8</accession>
<accession>Q5NVK1</accession>
<accession>Q5R9K5</accession>
<protein>
    <recommendedName>
        <fullName>Adenylyl cyclase-associated protein 2</fullName>
        <shortName>CAP 2</shortName>
    </recommendedName>
</protein>
<gene>
    <name type="primary">CAP2</name>
</gene>
<dbReference type="EMBL" id="CR859382">
    <property type="protein sequence ID" value="CAH91555.1"/>
    <property type="molecule type" value="mRNA"/>
</dbReference>
<dbReference type="EMBL" id="CR860723">
    <property type="protein sequence ID" value="CAH92838.1"/>
    <property type="molecule type" value="mRNA"/>
</dbReference>
<dbReference type="EMBL" id="CR926025">
    <property type="protein sequence ID" value="CAI29662.1"/>
    <property type="molecule type" value="mRNA"/>
</dbReference>
<dbReference type="RefSeq" id="NP_001125913.1">
    <property type="nucleotide sequence ID" value="NM_001132441.2"/>
</dbReference>
<dbReference type="SMR" id="Q5R5X8"/>
<dbReference type="STRING" id="9601.ENSPPYP00000018181"/>
<dbReference type="GeneID" id="100172846"/>
<dbReference type="KEGG" id="pon:100172846"/>
<dbReference type="CTD" id="10486"/>
<dbReference type="eggNOG" id="KOG2675">
    <property type="taxonomic scope" value="Eukaryota"/>
</dbReference>
<dbReference type="InParanoid" id="Q5R5X8"/>
<dbReference type="OrthoDB" id="1601at2759"/>
<dbReference type="Proteomes" id="UP000001595">
    <property type="component" value="Unplaced"/>
</dbReference>
<dbReference type="GO" id="GO:0005737">
    <property type="term" value="C:cytoplasm"/>
    <property type="evidence" value="ECO:0007669"/>
    <property type="project" value="TreeGrafter"/>
</dbReference>
<dbReference type="GO" id="GO:0005886">
    <property type="term" value="C:plasma membrane"/>
    <property type="evidence" value="ECO:0007669"/>
    <property type="project" value="UniProtKB-SubCell"/>
</dbReference>
<dbReference type="GO" id="GO:0003779">
    <property type="term" value="F:actin binding"/>
    <property type="evidence" value="ECO:0007669"/>
    <property type="project" value="InterPro"/>
</dbReference>
<dbReference type="GO" id="GO:0008179">
    <property type="term" value="F:adenylate cyclase binding"/>
    <property type="evidence" value="ECO:0007669"/>
    <property type="project" value="TreeGrafter"/>
</dbReference>
<dbReference type="GO" id="GO:0007015">
    <property type="term" value="P:actin filament organization"/>
    <property type="evidence" value="ECO:0007669"/>
    <property type="project" value="TreeGrafter"/>
</dbReference>
<dbReference type="GO" id="GO:0019933">
    <property type="term" value="P:cAMP-mediated signaling"/>
    <property type="evidence" value="ECO:0007669"/>
    <property type="project" value="TreeGrafter"/>
</dbReference>
<dbReference type="GO" id="GO:0000902">
    <property type="term" value="P:cell morphogenesis"/>
    <property type="evidence" value="ECO:0007669"/>
    <property type="project" value="TreeGrafter"/>
</dbReference>
<dbReference type="FunFam" id="1.25.40.330:FF:000001">
    <property type="entry name" value="Adenylyl cyclase-associated protein"/>
    <property type="match status" value="1"/>
</dbReference>
<dbReference type="FunFam" id="2.160.20.70:FF:000001">
    <property type="entry name" value="Adenylyl cyclase-associated protein"/>
    <property type="match status" value="1"/>
</dbReference>
<dbReference type="Gene3D" id="2.160.20.70">
    <property type="match status" value="1"/>
</dbReference>
<dbReference type="Gene3D" id="1.25.40.330">
    <property type="entry name" value="Adenylate cyclase-associated CAP, N-terminal domain"/>
    <property type="match status" value="1"/>
</dbReference>
<dbReference type="InterPro" id="IPR001837">
    <property type="entry name" value="Adenylate_cyclase-assoc_CAP"/>
</dbReference>
<dbReference type="InterPro" id="IPR013912">
    <property type="entry name" value="Adenylate_cyclase-assoc_CAP_C"/>
</dbReference>
<dbReference type="InterPro" id="IPR013992">
    <property type="entry name" value="Adenylate_cyclase-assoc_CAP_N"/>
</dbReference>
<dbReference type="InterPro" id="IPR017901">
    <property type="entry name" value="C-CAP_CF_C-like"/>
</dbReference>
<dbReference type="InterPro" id="IPR016098">
    <property type="entry name" value="CAP/MinC_C"/>
</dbReference>
<dbReference type="InterPro" id="IPR036223">
    <property type="entry name" value="CAP_C_sf"/>
</dbReference>
<dbReference type="InterPro" id="IPR028417">
    <property type="entry name" value="CAP_CS_C"/>
</dbReference>
<dbReference type="InterPro" id="IPR018106">
    <property type="entry name" value="CAP_CS_N"/>
</dbReference>
<dbReference type="InterPro" id="IPR053950">
    <property type="entry name" value="CAP_N"/>
</dbReference>
<dbReference type="InterPro" id="IPR036222">
    <property type="entry name" value="CAP_N_sf"/>
</dbReference>
<dbReference type="InterPro" id="IPR006599">
    <property type="entry name" value="CARP_motif"/>
</dbReference>
<dbReference type="PANTHER" id="PTHR10652">
    <property type="entry name" value="ADENYLYL CYCLASE-ASSOCIATED PROTEIN"/>
    <property type="match status" value="1"/>
</dbReference>
<dbReference type="PANTHER" id="PTHR10652:SF2">
    <property type="entry name" value="ADENYLYL CYCLASE-ASSOCIATED PROTEIN 2"/>
    <property type="match status" value="1"/>
</dbReference>
<dbReference type="Pfam" id="PF08603">
    <property type="entry name" value="CAP_C"/>
    <property type="match status" value="1"/>
</dbReference>
<dbReference type="Pfam" id="PF21938">
    <property type="entry name" value="CAP_N"/>
    <property type="match status" value="1"/>
</dbReference>
<dbReference type="Pfam" id="PF01213">
    <property type="entry name" value="CAP_N-CM"/>
    <property type="match status" value="1"/>
</dbReference>
<dbReference type="SMART" id="SM00673">
    <property type="entry name" value="CARP"/>
    <property type="match status" value="2"/>
</dbReference>
<dbReference type="SUPFAM" id="SSF69340">
    <property type="entry name" value="C-terminal domain of adenylylcyclase associated protein"/>
    <property type="match status" value="1"/>
</dbReference>
<dbReference type="SUPFAM" id="SSF101278">
    <property type="entry name" value="N-terminal domain of adenylylcyclase associated protein, CAP"/>
    <property type="match status" value="1"/>
</dbReference>
<dbReference type="PROSITE" id="PS51329">
    <property type="entry name" value="C_CAP_COFACTOR_C"/>
    <property type="match status" value="1"/>
</dbReference>
<dbReference type="PROSITE" id="PS01088">
    <property type="entry name" value="CAP_1"/>
    <property type="match status" value="1"/>
</dbReference>
<dbReference type="PROSITE" id="PS01089">
    <property type="entry name" value="CAP_2"/>
    <property type="match status" value="1"/>
</dbReference>
<name>CAP2_PONAB</name>
<feature type="initiator methionine" description="Removed" evidence="2">
    <location>
        <position position="1"/>
    </location>
</feature>
<feature type="chain" id="PRO_0000271436" description="Adenylyl cyclase-associated protein 2">
    <location>
        <begin position="2"/>
        <end position="477"/>
    </location>
</feature>
<feature type="domain" description="C-CAP/cofactor C-like" evidence="4">
    <location>
        <begin position="317"/>
        <end position="455"/>
    </location>
</feature>
<feature type="region of interest" description="Disordered" evidence="5">
    <location>
        <begin position="224"/>
        <end position="261"/>
    </location>
</feature>
<feature type="region of interest" description="Disordered" evidence="5">
    <location>
        <begin position="274"/>
        <end position="323"/>
    </location>
</feature>
<feature type="compositionally biased region" description="Pro residues" evidence="5">
    <location>
        <begin position="230"/>
        <end position="246"/>
    </location>
</feature>
<feature type="compositionally biased region" description="Low complexity" evidence="5">
    <location>
        <begin position="301"/>
        <end position="320"/>
    </location>
</feature>
<feature type="modified residue" description="N-acetylalanine" evidence="2">
    <location>
        <position position="2"/>
    </location>
</feature>
<feature type="modified residue" description="Phosphoserine" evidence="3">
    <location>
        <position position="301"/>
    </location>
</feature>
<feature type="modified residue" description="Phosphoserine" evidence="2">
    <location>
        <position position="309"/>
    </location>
</feature>
<feature type="sequence conflict" description="In Ref. 1; CAH91555." evidence="6" ref="1">
    <original>L</original>
    <variation>F</variation>
    <location>
        <position position="247"/>
    </location>
</feature>
<feature type="sequence conflict" description="In Ref. 1; CAI29662." evidence="6" ref="1">
    <original>Y</original>
    <variation>H</variation>
    <location>
        <position position="355"/>
    </location>
</feature>
<proteinExistence type="evidence at transcript level"/>